<proteinExistence type="inferred from homology"/>
<organism>
    <name type="scientific">Neisseria gonorrhoeae (strain ATCC 700825 / FA 1090)</name>
    <dbReference type="NCBI Taxonomy" id="242231"/>
    <lineage>
        <taxon>Bacteria</taxon>
        <taxon>Pseudomonadati</taxon>
        <taxon>Pseudomonadota</taxon>
        <taxon>Betaproteobacteria</taxon>
        <taxon>Neisseriales</taxon>
        <taxon>Neisseriaceae</taxon>
        <taxon>Neisseria</taxon>
    </lineage>
</organism>
<feature type="chain" id="PRO_1000012071" description="Bis(5'-nucleosyl)-tetraphosphatase, symmetrical">
    <location>
        <begin position="1"/>
        <end position="276"/>
    </location>
</feature>
<gene>
    <name evidence="1" type="primary">apaH</name>
    <name type="ordered locus">NGO_0231</name>
</gene>
<protein>
    <recommendedName>
        <fullName evidence="1">Bis(5'-nucleosyl)-tetraphosphatase, symmetrical</fullName>
        <ecNumber evidence="1">3.6.1.41</ecNumber>
    </recommendedName>
    <alternativeName>
        <fullName evidence="1">Ap4A hydrolase</fullName>
    </alternativeName>
    <alternativeName>
        <fullName evidence="1">Diadenosine 5',5'''-P1,P4-tetraphosphate pyrophosphohydrolase</fullName>
    </alternativeName>
    <alternativeName>
        <fullName evidence="1">Diadenosine tetraphosphatase</fullName>
    </alternativeName>
</protein>
<sequence length="276" mass="30879">MAHYAIGDIQGCFDELTALLGKIGFNHGTDTLWLTGDIVNRGPKSLETLQFCIRHENSVQIVLGNHDLYLLAVGCGEGALKRSDTIEPILKHPDGGKMLDWLRAQPLLIREGGRVMIHAGILPQWRIAKAESLAGEAEAELRGKKYVKFFSKMYGNKPAAWDEGLEGYARLRFIVNAFTRMRALTFKNELDFDYKSTVKKMPPYLRPWFKAPDRQNLDHTIIFGHWSSLGYTNADNVISLDTGALWGGQLTAVNLETEEITQVQAAGGIDWKSFAK</sequence>
<reference key="1">
    <citation type="submission" date="2003-03" db="EMBL/GenBank/DDBJ databases">
        <title>The complete genome sequence of Neisseria gonorrhoeae.</title>
        <authorList>
            <person name="Lewis L.A."/>
            <person name="Gillaspy A.F."/>
            <person name="McLaughlin R.E."/>
            <person name="Gipson M."/>
            <person name="Ducey T.F."/>
            <person name="Ownbey T."/>
            <person name="Hartman K."/>
            <person name="Nydick C."/>
            <person name="Carson M.B."/>
            <person name="Vaughn J."/>
            <person name="Thomson C."/>
            <person name="Song L."/>
            <person name="Lin S."/>
            <person name="Yuan X."/>
            <person name="Najar F."/>
            <person name="Zhan M."/>
            <person name="Ren Q."/>
            <person name="Zhu H."/>
            <person name="Qi S."/>
            <person name="Kenton S.M."/>
            <person name="Lai H."/>
            <person name="White J.D."/>
            <person name="Clifton S."/>
            <person name="Roe B.A."/>
            <person name="Dyer D.W."/>
        </authorList>
    </citation>
    <scope>NUCLEOTIDE SEQUENCE [LARGE SCALE GENOMIC DNA]</scope>
    <source>
        <strain>ATCC 700825 / FA 1090</strain>
    </source>
</reference>
<accession>Q5FA03</accession>
<evidence type="ECO:0000255" key="1">
    <source>
        <dbReference type="HAMAP-Rule" id="MF_00199"/>
    </source>
</evidence>
<keyword id="KW-0378">Hydrolase</keyword>
<keyword id="KW-1185">Reference proteome</keyword>
<name>APAH_NEIG1</name>
<comment type="function">
    <text evidence="1">Hydrolyzes diadenosine 5',5'''-P1,P4-tetraphosphate to yield ADP.</text>
</comment>
<comment type="catalytic activity">
    <reaction evidence="1">
        <text>P(1),P(4)-bis(5'-adenosyl) tetraphosphate + H2O = 2 ADP + 2 H(+)</text>
        <dbReference type="Rhea" id="RHEA:24252"/>
        <dbReference type="ChEBI" id="CHEBI:15377"/>
        <dbReference type="ChEBI" id="CHEBI:15378"/>
        <dbReference type="ChEBI" id="CHEBI:58141"/>
        <dbReference type="ChEBI" id="CHEBI:456216"/>
        <dbReference type="EC" id="3.6.1.41"/>
    </reaction>
</comment>
<comment type="similarity">
    <text evidence="1">Belongs to the Ap4A hydrolase family.</text>
</comment>
<dbReference type="EC" id="3.6.1.41" evidence="1"/>
<dbReference type="EMBL" id="AE004969">
    <property type="protein sequence ID" value="AAW88984.1"/>
    <property type="molecule type" value="Genomic_DNA"/>
</dbReference>
<dbReference type="RefSeq" id="WP_003687564.1">
    <property type="nucleotide sequence ID" value="NC_002946.2"/>
</dbReference>
<dbReference type="RefSeq" id="YP_207396.1">
    <property type="nucleotide sequence ID" value="NC_002946.2"/>
</dbReference>
<dbReference type="SMR" id="Q5FA03"/>
<dbReference type="STRING" id="242231.NGO_0231"/>
<dbReference type="KEGG" id="ngo:NGO_0231"/>
<dbReference type="PATRIC" id="fig|242231.10.peg.285"/>
<dbReference type="HOGENOM" id="CLU_056184_2_0_4"/>
<dbReference type="Proteomes" id="UP000000535">
    <property type="component" value="Chromosome"/>
</dbReference>
<dbReference type="GO" id="GO:0008803">
    <property type="term" value="F:bis(5'-nucleosyl)-tetraphosphatase (symmetrical) activity"/>
    <property type="evidence" value="ECO:0007669"/>
    <property type="project" value="UniProtKB-UniRule"/>
</dbReference>
<dbReference type="CDD" id="cd07422">
    <property type="entry name" value="MPP_ApaH"/>
    <property type="match status" value="1"/>
</dbReference>
<dbReference type="Gene3D" id="3.60.21.10">
    <property type="match status" value="1"/>
</dbReference>
<dbReference type="HAMAP" id="MF_00199">
    <property type="entry name" value="ApaH"/>
    <property type="match status" value="1"/>
</dbReference>
<dbReference type="InterPro" id="IPR004617">
    <property type="entry name" value="ApaH"/>
</dbReference>
<dbReference type="InterPro" id="IPR004843">
    <property type="entry name" value="Calcineurin-like_PHP_ApaH"/>
</dbReference>
<dbReference type="InterPro" id="IPR029052">
    <property type="entry name" value="Metallo-depent_PP-like"/>
</dbReference>
<dbReference type="NCBIfam" id="TIGR00668">
    <property type="entry name" value="apaH"/>
    <property type="match status" value="1"/>
</dbReference>
<dbReference type="NCBIfam" id="NF001204">
    <property type="entry name" value="PRK00166.1"/>
    <property type="match status" value="1"/>
</dbReference>
<dbReference type="PANTHER" id="PTHR40942">
    <property type="match status" value="1"/>
</dbReference>
<dbReference type="PANTHER" id="PTHR40942:SF4">
    <property type="entry name" value="CYTOCHROME C5"/>
    <property type="match status" value="1"/>
</dbReference>
<dbReference type="Pfam" id="PF00149">
    <property type="entry name" value="Metallophos"/>
    <property type="match status" value="1"/>
</dbReference>
<dbReference type="PIRSF" id="PIRSF000903">
    <property type="entry name" value="B5n-ttraPtase_sm"/>
    <property type="match status" value="1"/>
</dbReference>
<dbReference type="SUPFAM" id="SSF56300">
    <property type="entry name" value="Metallo-dependent phosphatases"/>
    <property type="match status" value="1"/>
</dbReference>